<accession>O32078</accession>
<dbReference type="EMBL" id="AL009126">
    <property type="protein sequence ID" value="CAB15081.1"/>
    <property type="molecule type" value="Genomic_DNA"/>
</dbReference>
<dbReference type="PIR" id="G70005">
    <property type="entry name" value="G70005"/>
</dbReference>
<dbReference type="RefSeq" id="NP_390981.1">
    <property type="nucleotide sequence ID" value="NC_000964.3"/>
</dbReference>
<dbReference type="RefSeq" id="WP_003242867.1">
    <property type="nucleotide sequence ID" value="NZ_OZ025638.1"/>
</dbReference>
<dbReference type="SMR" id="O32078"/>
<dbReference type="FunCoup" id="O32078">
    <property type="interactions" value="7"/>
</dbReference>
<dbReference type="STRING" id="224308.BSU31030"/>
<dbReference type="jPOST" id="O32078"/>
<dbReference type="PaxDb" id="224308-BSU31030"/>
<dbReference type="EnsemblBacteria" id="CAB15081">
    <property type="protein sequence ID" value="CAB15081"/>
    <property type="gene ID" value="BSU_31030"/>
</dbReference>
<dbReference type="GeneID" id="937143"/>
<dbReference type="KEGG" id="bsu:BSU31030"/>
<dbReference type="PATRIC" id="fig|224308.179.peg.3363"/>
<dbReference type="eggNOG" id="COG2318">
    <property type="taxonomic scope" value="Bacteria"/>
</dbReference>
<dbReference type="InParanoid" id="O32078"/>
<dbReference type="OrthoDB" id="5464839at2"/>
<dbReference type="BioCyc" id="BSUB:BSU31030-MONOMER"/>
<dbReference type="Proteomes" id="UP000001570">
    <property type="component" value="Chromosome"/>
</dbReference>
<dbReference type="Gene3D" id="1.20.120.450">
    <property type="entry name" value="dinb family like domain"/>
    <property type="match status" value="1"/>
</dbReference>
<dbReference type="InterPro" id="IPR024775">
    <property type="entry name" value="DinB-like"/>
</dbReference>
<dbReference type="InterPro" id="IPR034660">
    <property type="entry name" value="DinB/YfiT-like"/>
</dbReference>
<dbReference type="Pfam" id="PF12867">
    <property type="entry name" value="DinB_2"/>
    <property type="match status" value="1"/>
</dbReference>
<dbReference type="SUPFAM" id="SSF109854">
    <property type="entry name" value="DinB/YfiT-like putative metalloenzymes"/>
    <property type="match status" value="1"/>
</dbReference>
<proteinExistence type="predicted"/>
<reference key="1">
    <citation type="journal article" date="1997" name="Nature">
        <title>The complete genome sequence of the Gram-positive bacterium Bacillus subtilis.</title>
        <authorList>
            <person name="Kunst F."/>
            <person name="Ogasawara N."/>
            <person name="Moszer I."/>
            <person name="Albertini A.M."/>
            <person name="Alloni G."/>
            <person name="Azevedo V."/>
            <person name="Bertero M.G."/>
            <person name="Bessieres P."/>
            <person name="Bolotin A."/>
            <person name="Borchert S."/>
            <person name="Borriss R."/>
            <person name="Boursier L."/>
            <person name="Brans A."/>
            <person name="Braun M."/>
            <person name="Brignell S.C."/>
            <person name="Bron S."/>
            <person name="Brouillet S."/>
            <person name="Bruschi C.V."/>
            <person name="Caldwell B."/>
            <person name="Capuano V."/>
            <person name="Carter N.M."/>
            <person name="Choi S.-K."/>
            <person name="Codani J.-J."/>
            <person name="Connerton I.F."/>
            <person name="Cummings N.J."/>
            <person name="Daniel R.A."/>
            <person name="Denizot F."/>
            <person name="Devine K.M."/>
            <person name="Duesterhoeft A."/>
            <person name="Ehrlich S.D."/>
            <person name="Emmerson P.T."/>
            <person name="Entian K.-D."/>
            <person name="Errington J."/>
            <person name="Fabret C."/>
            <person name="Ferrari E."/>
            <person name="Foulger D."/>
            <person name="Fritz C."/>
            <person name="Fujita M."/>
            <person name="Fujita Y."/>
            <person name="Fuma S."/>
            <person name="Galizzi A."/>
            <person name="Galleron N."/>
            <person name="Ghim S.-Y."/>
            <person name="Glaser P."/>
            <person name="Goffeau A."/>
            <person name="Golightly E.J."/>
            <person name="Grandi G."/>
            <person name="Guiseppi G."/>
            <person name="Guy B.J."/>
            <person name="Haga K."/>
            <person name="Haiech J."/>
            <person name="Harwood C.R."/>
            <person name="Henaut A."/>
            <person name="Hilbert H."/>
            <person name="Holsappel S."/>
            <person name="Hosono S."/>
            <person name="Hullo M.-F."/>
            <person name="Itaya M."/>
            <person name="Jones L.-M."/>
            <person name="Joris B."/>
            <person name="Karamata D."/>
            <person name="Kasahara Y."/>
            <person name="Klaerr-Blanchard M."/>
            <person name="Klein C."/>
            <person name="Kobayashi Y."/>
            <person name="Koetter P."/>
            <person name="Koningstein G."/>
            <person name="Krogh S."/>
            <person name="Kumano M."/>
            <person name="Kurita K."/>
            <person name="Lapidus A."/>
            <person name="Lardinois S."/>
            <person name="Lauber J."/>
            <person name="Lazarevic V."/>
            <person name="Lee S.-M."/>
            <person name="Levine A."/>
            <person name="Liu H."/>
            <person name="Masuda S."/>
            <person name="Mauel C."/>
            <person name="Medigue C."/>
            <person name="Medina N."/>
            <person name="Mellado R.P."/>
            <person name="Mizuno M."/>
            <person name="Moestl D."/>
            <person name="Nakai S."/>
            <person name="Noback M."/>
            <person name="Noone D."/>
            <person name="O'Reilly M."/>
            <person name="Ogawa K."/>
            <person name="Ogiwara A."/>
            <person name="Oudega B."/>
            <person name="Park S.-H."/>
            <person name="Parro V."/>
            <person name="Pohl T.M."/>
            <person name="Portetelle D."/>
            <person name="Porwollik S."/>
            <person name="Prescott A.M."/>
            <person name="Presecan E."/>
            <person name="Pujic P."/>
            <person name="Purnelle B."/>
            <person name="Rapoport G."/>
            <person name="Rey M."/>
            <person name="Reynolds S."/>
            <person name="Rieger M."/>
            <person name="Rivolta C."/>
            <person name="Rocha E."/>
            <person name="Roche B."/>
            <person name="Rose M."/>
            <person name="Sadaie Y."/>
            <person name="Sato T."/>
            <person name="Scanlan E."/>
            <person name="Schleich S."/>
            <person name="Schroeter R."/>
            <person name="Scoffone F."/>
            <person name="Sekiguchi J."/>
            <person name="Sekowska A."/>
            <person name="Seror S.J."/>
            <person name="Serror P."/>
            <person name="Shin B.-S."/>
            <person name="Soldo B."/>
            <person name="Sorokin A."/>
            <person name="Tacconi E."/>
            <person name="Takagi T."/>
            <person name="Takahashi H."/>
            <person name="Takemaru K."/>
            <person name="Takeuchi M."/>
            <person name="Tamakoshi A."/>
            <person name="Tanaka T."/>
            <person name="Terpstra P."/>
            <person name="Tognoni A."/>
            <person name="Tosato V."/>
            <person name="Uchiyama S."/>
            <person name="Vandenbol M."/>
            <person name="Vannier F."/>
            <person name="Vassarotti A."/>
            <person name="Viari A."/>
            <person name="Wambutt R."/>
            <person name="Wedler E."/>
            <person name="Wedler H."/>
            <person name="Weitzenegger T."/>
            <person name="Winters P."/>
            <person name="Wipat A."/>
            <person name="Yamamoto H."/>
            <person name="Yamane K."/>
            <person name="Yasumoto K."/>
            <person name="Yata K."/>
            <person name="Yoshida K."/>
            <person name="Yoshikawa H.-F."/>
            <person name="Zumstein E."/>
            <person name="Yoshikawa H."/>
            <person name="Danchin A."/>
        </authorList>
    </citation>
    <scope>NUCLEOTIDE SEQUENCE [LARGE SCALE GENOMIC DNA]</scope>
    <source>
        <strain>168</strain>
    </source>
</reference>
<organism>
    <name type="scientific">Bacillus subtilis (strain 168)</name>
    <dbReference type="NCBI Taxonomy" id="224308"/>
    <lineage>
        <taxon>Bacteria</taxon>
        <taxon>Bacillati</taxon>
        <taxon>Bacillota</taxon>
        <taxon>Bacilli</taxon>
        <taxon>Bacillales</taxon>
        <taxon>Bacillaceae</taxon>
        <taxon>Bacillus</taxon>
    </lineage>
</organism>
<evidence type="ECO:0000256" key="1">
    <source>
        <dbReference type="SAM" id="MobiDB-lite"/>
    </source>
</evidence>
<name>YUAE_BACSU</name>
<protein>
    <recommendedName>
        <fullName>Uncharacterized protein YuaE</fullName>
    </recommendedName>
</protein>
<gene>
    <name type="primary">yuaE</name>
    <name type="ordered locus">BSU31030</name>
</gene>
<keyword id="KW-1185">Reference proteome</keyword>
<sequence length="162" mass="19111">MSIFNEARLETWNELKGLSDEKLNQKPSAEEWSIREVLDHLKKIDMTAQKMLKERVKDAPIKEIEEKPLEVAQDRNNKRKAPSHLEPAHDFISGSQMKRELDVVREQLTAAIASLKEEDFERVLPHPVFQELTVRQWIDFIGHHEKRHLSQMKEIKEKIERA</sequence>
<feature type="chain" id="PRO_0000372602" description="Uncharacterized protein YuaE">
    <location>
        <begin position="1"/>
        <end position="162"/>
    </location>
</feature>
<feature type="region of interest" description="Disordered" evidence="1">
    <location>
        <begin position="65"/>
        <end position="93"/>
    </location>
</feature>
<feature type="compositionally biased region" description="Basic and acidic residues" evidence="1">
    <location>
        <begin position="65"/>
        <end position="76"/>
    </location>
</feature>